<sequence length="366" mass="41265">MWPLSHRHLCLAFLLVCVLSAISFFLHIHQDSIRHGLGLSVLCPDRRLVTPPVAIFCLPGTPMSPNTSSPCPQNSASLSGTWTIYPDGRFGNQMGQYATLLALAQLNGRRAFILPAMHAALAPVFRITLPVLAPEVDSRTPWRELRLHDWMSEEYADLGDPFLKLSGFPCSWTFFHHLREQIRSEFTLHDHLREEAQSVLRRLRLGRSGDQPRTFVGVHVRRGDYLQVMPQRWKGVVGNGAYLREAMDWFRARHEAPVFVVTSNGMDWCRENIDASKGDVMFAGDGQEASPWKDFALLTQCNHTIMTIGTFGFWAAYLAGGDTVYLANFTLPDSEFLKIFKPEAAFLPEWVGINADLSPLWTLAEP</sequence>
<keyword id="KW-0325">Glycoprotein</keyword>
<keyword id="KW-0328">Glycosyltransferase</keyword>
<keyword id="KW-0333">Golgi apparatus</keyword>
<keyword id="KW-0443">Lipid metabolism</keyword>
<keyword id="KW-0472">Membrane</keyword>
<keyword id="KW-0735">Signal-anchor</keyword>
<keyword id="KW-0808">Transferase</keyword>
<keyword id="KW-0812">Transmembrane</keyword>
<keyword id="KW-1133">Transmembrane helix</keyword>
<gene>
    <name evidence="3" type="primary">FUT1</name>
</gene>
<proteinExistence type="inferred from homology"/>
<reference key="1">
    <citation type="submission" date="2003-01" db="EMBL/GenBank/DDBJ databases">
        <title>Molecular evolution of the H (FUT1) gene in New World monkeys (Primates, Platyrrhini): evidence of divergent evolution and purifying selection.</title>
        <authorList>
            <person name="Borges B.N."/>
            <person name="Harada M.L."/>
        </authorList>
    </citation>
    <scope>NUCLEOTIDE SEQUENCE [GENOMIC DNA]</scope>
</reference>
<organism>
    <name type="scientific">Aotus azarae</name>
    <name type="common">Azara's night monkey</name>
    <name type="synonym">Simia azarae</name>
    <dbReference type="NCBI Taxonomy" id="30591"/>
    <lineage>
        <taxon>Eukaryota</taxon>
        <taxon>Metazoa</taxon>
        <taxon>Chordata</taxon>
        <taxon>Craniata</taxon>
        <taxon>Vertebrata</taxon>
        <taxon>Euteleostomi</taxon>
        <taxon>Mammalia</taxon>
        <taxon>Eutheria</taxon>
        <taxon>Euarchontoglires</taxon>
        <taxon>Primates</taxon>
        <taxon>Haplorrhini</taxon>
        <taxon>Platyrrhini</taxon>
        <taxon>Aotidae</taxon>
        <taxon>Aotus</taxon>
    </lineage>
</organism>
<evidence type="ECO:0000250" key="1">
    <source>
        <dbReference type="UniProtKB" id="F6Q1T7"/>
    </source>
</evidence>
<evidence type="ECO:0000250" key="2">
    <source>
        <dbReference type="UniProtKB" id="O09160"/>
    </source>
</evidence>
<evidence type="ECO:0000250" key="3">
    <source>
        <dbReference type="UniProtKB" id="P19526"/>
    </source>
</evidence>
<evidence type="ECO:0000255" key="4"/>
<evidence type="ECO:0000305" key="5"/>
<accession>Q866E6</accession>
<name>FUT1_AOTAZ</name>
<dbReference type="EC" id="2.4.1.69" evidence="2"/>
<dbReference type="EC" id="2.4.1.344" evidence="3"/>
<dbReference type="EMBL" id="AY219622">
    <property type="protein sequence ID" value="AAO43064.1"/>
    <property type="molecule type" value="Genomic_DNA"/>
</dbReference>
<dbReference type="SMR" id="Q866E6"/>
<dbReference type="CAZy" id="GT11">
    <property type="family name" value="Glycosyltransferase Family 11"/>
</dbReference>
<dbReference type="GlyCosmos" id="Q866E6">
    <property type="glycosylation" value="3 sites, No reported glycans"/>
</dbReference>
<dbReference type="UniPathway" id="UPA00378"/>
<dbReference type="GO" id="GO:0032580">
    <property type="term" value="C:Golgi cisterna membrane"/>
    <property type="evidence" value="ECO:0007669"/>
    <property type="project" value="UniProtKB-SubCell"/>
</dbReference>
<dbReference type="GO" id="GO:0031127">
    <property type="term" value="F:alpha-(1,2)-fucosyltransferase activity"/>
    <property type="evidence" value="ECO:0000250"/>
    <property type="project" value="UniProtKB"/>
</dbReference>
<dbReference type="GO" id="GO:0008107">
    <property type="term" value="F:galactoside 2-alpha-L-fucosyltransferase activity"/>
    <property type="evidence" value="ECO:0007669"/>
    <property type="project" value="UniProtKB-EC"/>
</dbReference>
<dbReference type="GO" id="GO:0005975">
    <property type="term" value="P:carbohydrate metabolic process"/>
    <property type="evidence" value="ECO:0007669"/>
    <property type="project" value="InterPro"/>
</dbReference>
<dbReference type="GO" id="GO:0036065">
    <property type="term" value="P:fucosylation"/>
    <property type="evidence" value="ECO:0000250"/>
    <property type="project" value="UniProtKB"/>
</dbReference>
<dbReference type="GO" id="GO:0006629">
    <property type="term" value="P:lipid metabolic process"/>
    <property type="evidence" value="ECO:0007669"/>
    <property type="project" value="UniProtKB-KW"/>
</dbReference>
<dbReference type="GO" id="GO:0021772">
    <property type="term" value="P:olfactory bulb development"/>
    <property type="evidence" value="ECO:0000250"/>
    <property type="project" value="UniProtKB"/>
</dbReference>
<dbReference type="GO" id="GO:0001954">
    <property type="term" value="P:positive regulation of cell-matrix adhesion"/>
    <property type="evidence" value="ECO:0000250"/>
    <property type="project" value="UniProtKB"/>
</dbReference>
<dbReference type="GO" id="GO:0010595">
    <property type="term" value="P:positive regulation of endothelial cell migration"/>
    <property type="evidence" value="ECO:0000250"/>
    <property type="project" value="UniProtKB"/>
</dbReference>
<dbReference type="GO" id="GO:1904906">
    <property type="term" value="P:positive regulation of endothelial cell-matrix adhesion via fibronectin"/>
    <property type="evidence" value="ECO:0000250"/>
    <property type="project" value="UniProtKB"/>
</dbReference>
<dbReference type="GO" id="GO:1903672">
    <property type="term" value="P:positive regulation of sprouting angiogenesis"/>
    <property type="evidence" value="ECO:0000250"/>
    <property type="project" value="UniProtKB"/>
</dbReference>
<dbReference type="GO" id="GO:0006486">
    <property type="term" value="P:protein glycosylation"/>
    <property type="evidence" value="ECO:0000250"/>
    <property type="project" value="UniProtKB"/>
</dbReference>
<dbReference type="GO" id="GO:0030155">
    <property type="term" value="P:regulation of cell adhesion"/>
    <property type="evidence" value="ECO:0000250"/>
    <property type="project" value="UniProtKB"/>
</dbReference>
<dbReference type="GO" id="GO:0001936">
    <property type="term" value="P:regulation of endothelial cell proliferation"/>
    <property type="evidence" value="ECO:0000250"/>
    <property type="project" value="UniProtKB"/>
</dbReference>
<dbReference type="CDD" id="cd11301">
    <property type="entry name" value="Fut1_Fut2_like"/>
    <property type="match status" value="1"/>
</dbReference>
<dbReference type="InterPro" id="IPR002516">
    <property type="entry name" value="Glyco_trans_11"/>
</dbReference>
<dbReference type="PANTHER" id="PTHR11927">
    <property type="entry name" value="GALACTOSIDE 2-L-FUCOSYLTRANSFERASE"/>
    <property type="match status" value="1"/>
</dbReference>
<dbReference type="PANTHER" id="PTHR11927:SF4">
    <property type="entry name" value="GALACTOSIDE ALPHA-(1,2)-FUCOSYLTRANSFERASE 1"/>
    <property type="match status" value="1"/>
</dbReference>
<dbReference type="Pfam" id="PF01531">
    <property type="entry name" value="Glyco_transf_11"/>
    <property type="match status" value="1"/>
</dbReference>
<feature type="chain" id="PRO_0000149088" description="Galactoside alpha-(1,2)-fucosyltransferase 1">
    <location>
        <begin position="1"/>
        <end position="366"/>
    </location>
</feature>
<feature type="topological domain" description="Cytoplasmic" evidence="4">
    <location>
        <begin position="1"/>
        <end position="8"/>
    </location>
</feature>
<feature type="transmembrane region" description="Helical; Signal-anchor for type II membrane protein" evidence="4">
    <location>
        <begin position="9"/>
        <end position="25"/>
    </location>
</feature>
<feature type="topological domain" description="Lumenal" evidence="4">
    <location>
        <begin position="26"/>
        <end position="366"/>
    </location>
</feature>
<feature type="glycosylation site" description="N-linked (GlcNAc...) asparagine" evidence="4">
    <location>
        <position position="66"/>
    </location>
</feature>
<feature type="glycosylation site" description="N-linked (GlcNAc...) asparagine" evidence="4">
    <location>
        <position position="302"/>
    </location>
</feature>
<feature type="glycosylation site" description="N-linked (GlcNAc...) asparagine" evidence="4">
    <location>
        <position position="328"/>
    </location>
</feature>
<protein>
    <recommendedName>
        <fullName evidence="3">Galactoside alpha-(1,2)-fucosyltransferase 1</fullName>
    </recommendedName>
    <alternativeName>
        <fullName>Alpha(1,2)FT 1</fullName>
    </alternativeName>
    <alternativeName>
        <fullName>Fucosyltransferase 1</fullName>
    </alternativeName>
    <alternativeName>
        <fullName>GDP-L-fucose:beta-D-galactoside 2-alpha-L-fucosyltransferase 1</fullName>
    </alternativeName>
    <alternativeName>
        <fullName evidence="2">Type 1 galactoside alpha-(1,2)-fucosyltransferase FUT1</fullName>
        <ecNumber evidence="2">2.4.1.69</ecNumber>
    </alternativeName>
    <alternativeName>
        <fullName evidence="3">Type 2 galactoside alpha-(1,2)-fucosyltransferase FUT1</fullName>
        <ecNumber evidence="3">2.4.1.344</ecNumber>
    </alternativeName>
</protein>
<comment type="function">
    <text evidence="2 3">Catalyzes the transfer of L-fucose, from a guanosine diphosphate-beta-L-fucose, to the terminal galactose residue of glycoconjugates through an alpha(1,2) linkage leading to H antigen synthesis that is an intermediate substrate in the synthesis of ABO blood group antigens. H antigen is essential for maturation of the glomerular layer of the main olfactory bulb, in cell migration and early cell-cell contacts during tumor associated angiogenesis (By similarity). Preferentially fucosylates soluble lactose and to a lesser extent fucosylates glycolipids gangliosides GA1 and GM1a (By similarity).</text>
</comment>
<comment type="catalytic activity">
    <reaction evidence="3">
        <text>a beta-D-galactosyl-(1-&gt;4)-N-acetyl-beta-D-glucosaminyl derivative + GDP-beta-L-fucose = an alpha-L-Fuc-(1-&gt;2)-beta-D-Gal-(1-&gt;4)-beta-D-GlcNAc derivative + GDP + H(+)</text>
        <dbReference type="Rhea" id="RHEA:50668"/>
        <dbReference type="ChEBI" id="CHEBI:15378"/>
        <dbReference type="ChEBI" id="CHEBI:57273"/>
        <dbReference type="ChEBI" id="CHEBI:58189"/>
        <dbReference type="ChEBI" id="CHEBI:133507"/>
        <dbReference type="ChEBI" id="CHEBI:133510"/>
        <dbReference type="EC" id="2.4.1.344"/>
    </reaction>
</comment>
<comment type="catalytic activity">
    <reaction evidence="2">
        <text>a ganglioside GA1 + GDP-beta-L-fucose = a ganglioside Fuc-GA1 + GDP + H(+)</text>
        <dbReference type="Rhea" id="RHEA:48320"/>
        <dbReference type="ChEBI" id="CHEBI:15378"/>
        <dbReference type="ChEBI" id="CHEBI:57273"/>
        <dbReference type="ChEBI" id="CHEBI:58189"/>
        <dbReference type="ChEBI" id="CHEBI:88069"/>
        <dbReference type="ChEBI" id="CHEBI:90262"/>
    </reaction>
    <physiologicalReaction direction="left-to-right" evidence="2">
        <dbReference type="Rhea" id="RHEA:48321"/>
    </physiologicalReaction>
</comment>
<comment type="catalytic activity">
    <reaction evidence="2">
        <text>a beta-D-Gal-(1-&gt;3)-beta-D-GlcNAc-(1-&gt;3)-beta-D-Gal-(1-&gt;4)-beta-D-Glc-(1&lt;-&gt;1')-Cer(d18:1(4E)) + GDP-beta-L-fucose = alpha-L-fucosyl-(1-&gt;2)- beta-D-galactosyl-(1-&gt;3)-N-acetyl-beta-D-glucosaminyl-(1-&gt;3)-beta-D-galactosyl-(1-&gt;4)-beta-D-glucosyl-(1&lt;-&gt;1')-N-acylsphing-4-enine + GDP + H(+)</text>
        <dbReference type="Rhea" id="RHEA:32175"/>
        <dbReference type="ChEBI" id="CHEBI:15378"/>
        <dbReference type="ChEBI" id="CHEBI:17292"/>
        <dbReference type="ChEBI" id="CHEBI:28743"/>
        <dbReference type="ChEBI" id="CHEBI:57273"/>
        <dbReference type="ChEBI" id="CHEBI:58189"/>
        <dbReference type="EC" id="2.4.1.69"/>
    </reaction>
    <physiologicalReaction direction="left-to-right" evidence="2">
        <dbReference type="Rhea" id="RHEA:32176"/>
    </physiologicalReaction>
</comment>
<comment type="catalytic activity">
    <reaction evidence="2">
        <text>a neolactoside nLc4Cer(d18:1(4E)) + GDP-beta-L-fucose = a neolactoside IV(2)-alpha-Fuc-nLc4Cer(d18:1(4E)) + GDP + H(+)</text>
        <dbReference type="Rhea" id="RHEA:48304"/>
        <dbReference type="ChEBI" id="CHEBI:15378"/>
        <dbReference type="ChEBI" id="CHEBI:17006"/>
        <dbReference type="ChEBI" id="CHEBI:28691"/>
        <dbReference type="ChEBI" id="CHEBI:57273"/>
        <dbReference type="ChEBI" id="CHEBI:58189"/>
    </reaction>
    <physiologicalReaction direction="left-to-right" evidence="2">
        <dbReference type="Rhea" id="RHEA:48305"/>
    </physiologicalReaction>
</comment>
<comment type="catalytic activity">
    <reaction evidence="1">
        <text>a ganglioside GM1 + GDP-beta-L-fucose = a ganglioside Fuc-GM1 + GDP + H(+)</text>
        <dbReference type="Rhea" id="RHEA:48292"/>
        <dbReference type="ChEBI" id="CHEBI:15378"/>
        <dbReference type="ChEBI" id="CHEBI:57273"/>
        <dbReference type="ChEBI" id="CHEBI:58189"/>
        <dbReference type="ChEBI" id="CHEBI:82639"/>
        <dbReference type="ChEBI" id="CHEBI:90189"/>
    </reaction>
    <physiologicalReaction direction="left-to-right" evidence="1">
        <dbReference type="Rhea" id="RHEA:48293"/>
    </physiologicalReaction>
</comment>
<comment type="catalytic activity">
    <reaction evidence="1">
        <text>beta-D-galactosyl-(1-&gt;3)-N-acetyl-D-galactosamine + GDP-beta-L-fucose = alpha-L-fucosyl-(1-&gt;2)-beta-D-galactosyl-(1-&gt;3)-N-acetyl-D-galactosamine + GDP + H(+)</text>
        <dbReference type="Rhea" id="RHEA:62964"/>
        <dbReference type="ChEBI" id="CHEBI:15378"/>
        <dbReference type="ChEBI" id="CHEBI:57273"/>
        <dbReference type="ChEBI" id="CHEBI:58189"/>
        <dbReference type="ChEBI" id="CHEBI:84728"/>
        <dbReference type="ChEBI" id="CHEBI:546807"/>
    </reaction>
    <physiologicalReaction direction="left-to-right" evidence="1">
        <dbReference type="Rhea" id="RHEA:62965"/>
    </physiologicalReaction>
</comment>
<comment type="pathway">
    <text evidence="3">Protein modification; protein glycosylation.</text>
</comment>
<comment type="subcellular location">
    <subcellularLocation>
        <location evidence="2">Golgi apparatus</location>
        <location evidence="2">Golgi stack membrane</location>
        <topology evidence="2">Single-pass type II membrane protein</topology>
    </subcellularLocation>
    <text evidence="2">Membrane-bound form in trans cisternae of Golgi.</text>
</comment>
<comment type="similarity">
    <text evidence="5">Belongs to the glycosyltransferase 11 family.</text>
</comment>